<gene>
    <name evidence="6" type="primary">fan1</name>
    <name evidence="8" type="ordered locus">PA1865</name>
</gene>
<dbReference type="EC" id="3.1.4.1" evidence="3 4"/>
<dbReference type="EMBL" id="AE004091">
    <property type="protein sequence ID" value="AAG05254.1"/>
    <property type="molecule type" value="Genomic_DNA"/>
</dbReference>
<dbReference type="PIR" id="D83413">
    <property type="entry name" value="D83413"/>
</dbReference>
<dbReference type="RefSeq" id="NP_250556.1">
    <property type="nucleotide sequence ID" value="NC_002516.2"/>
</dbReference>
<dbReference type="RefSeq" id="WP_003113615.1">
    <property type="nucleotide sequence ID" value="NZ_QZGE01000003.1"/>
</dbReference>
<dbReference type="PDB" id="4R89">
    <property type="method" value="X-ray"/>
    <property type="resolution" value="4.00 A"/>
    <property type="chains" value="A/E=1-559"/>
</dbReference>
<dbReference type="PDB" id="4R8A">
    <property type="method" value="X-ray"/>
    <property type="resolution" value="3.20 A"/>
    <property type="chains" value="A/F=1-559"/>
</dbReference>
<dbReference type="PDB" id="5Y7G">
    <property type="method" value="X-ray"/>
    <property type="resolution" value="3.40 A"/>
    <property type="chains" value="A/B/C=1-559"/>
</dbReference>
<dbReference type="PDB" id="5Y7Q">
    <property type="method" value="X-ray"/>
    <property type="resolution" value="2.70 A"/>
    <property type="chains" value="A=1-559"/>
</dbReference>
<dbReference type="PDB" id="5Z6W">
    <property type="method" value="X-ray"/>
    <property type="resolution" value="3.20 A"/>
    <property type="chains" value="A=1-559"/>
</dbReference>
<dbReference type="PDBsum" id="4R89"/>
<dbReference type="PDBsum" id="4R8A"/>
<dbReference type="PDBsum" id="5Y7G"/>
<dbReference type="PDBsum" id="5Y7Q"/>
<dbReference type="PDBsum" id="5Z6W"/>
<dbReference type="SMR" id="Q9I2N0"/>
<dbReference type="STRING" id="208964.PA1865"/>
<dbReference type="PaxDb" id="208964-PA1865"/>
<dbReference type="GeneID" id="877940"/>
<dbReference type="KEGG" id="pae:PA1865"/>
<dbReference type="PATRIC" id="fig|208964.12.peg.1941"/>
<dbReference type="PseudoCAP" id="PA1865"/>
<dbReference type="HOGENOM" id="CLU_036183_0_0_6"/>
<dbReference type="InParanoid" id="Q9I2N0"/>
<dbReference type="OrthoDB" id="9803913at2"/>
<dbReference type="PhylomeDB" id="Q9I2N0"/>
<dbReference type="BioCyc" id="PAER208964:G1FZ6-1904-MONOMER"/>
<dbReference type="EvolutionaryTrace" id="Q9I2N0"/>
<dbReference type="Proteomes" id="UP000002438">
    <property type="component" value="Chromosome"/>
</dbReference>
<dbReference type="GO" id="GO:0008409">
    <property type="term" value="F:5'-3' exonuclease activity"/>
    <property type="evidence" value="ECO:0000314"/>
    <property type="project" value="UniProtKB"/>
</dbReference>
<dbReference type="GO" id="GO:0017108">
    <property type="term" value="F:5'-flap endonuclease activity"/>
    <property type="evidence" value="ECO:0000314"/>
    <property type="project" value="UniProtKB"/>
</dbReference>
<dbReference type="GO" id="GO:0070336">
    <property type="term" value="F:flap-structured DNA binding"/>
    <property type="evidence" value="ECO:0000314"/>
    <property type="project" value="UniProtKB"/>
</dbReference>
<dbReference type="GO" id="GO:0000287">
    <property type="term" value="F:magnesium ion binding"/>
    <property type="evidence" value="ECO:0000314"/>
    <property type="project" value="UniProtKB"/>
</dbReference>
<dbReference type="GO" id="GO:0030145">
    <property type="term" value="F:manganese ion binding"/>
    <property type="evidence" value="ECO:0000314"/>
    <property type="project" value="UniProtKB"/>
</dbReference>
<dbReference type="GO" id="GO:0004528">
    <property type="term" value="F:phosphodiesterase I activity"/>
    <property type="evidence" value="ECO:0007669"/>
    <property type="project" value="UniProtKB-EC"/>
</dbReference>
<dbReference type="GO" id="GO:0036297">
    <property type="term" value="P:interstrand cross-link repair"/>
    <property type="evidence" value="ECO:0007669"/>
    <property type="project" value="InterPro"/>
</dbReference>
<dbReference type="FunFam" id="3.40.1350.10:FF:000024">
    <property type="entry name" value="Fanconi-associated nuclease"/>
    <property type="match status" value="1"/>
</dbReference>
<dbReference type="Gene3D" id="3.40.1350.10">
    <property type="match status" value="1"/>
</dbReference>
<dbReference type="InterPro" id="IPR033315">
    <property type="entry name" value="Fan1-like"/>
</dbReference>
<dbReference type="InterPro" id="IPR049125">
    <property type="entry name" value="FAN1-like_WH"/>
</dbReference>
<dbReference type="InterPro" id="IPR040603">
    <property type="entry name" value="FAN1_SAP_bact"/>
</dbReference>
<dbReference type="InterPro" id="IPR011856">
    <property type="entry name" value="tRNA_endonuc-like_dom_sf"/>
</dbReference>
<dbReference type="InterPro" id="IPR014883">
    <property type="entry name" value="VRR_NUC"/>
</dbReference>
<dbReference type="PANTHER" id="PTHR15749">
    <property type="entry name" value="FANCONI-ASSOCIATED NUCLEASE 1"/>
    <property type="match status" value="1"/>
</dbReference>
<dbReference type="PANTHER" id="PTHR15749:SF4">
    <property type="entry name" value="FANCONI-ASSOCIATED NUCLEASE 1"/>
    <property type="match status" value="1"/>
</dbReference>
<dbReference type="Pfam" id="PF21315">
    <property type="entry name" value="FAN1_HTH"/>
    <property type="match status" value="1"/>
</dbReference>
<dbReference type="Pfam" id="PF18081">
    <property type="entry name" value="FANC_SAP"/>
    <property type="match status" value="1"/>
</dbReference>
<dbReference type="Pfam" id="PF08774">
    <property type="entry name" value="VRR_NUC"/>
    <property type="match status" value="1"/>
</dbReference>
<dbReference type="SMART" id="SM00990">
    <property type="entry name" value="VRR_NUC"/>
    <property type="match status" value="1"/>
</dbReference>
<comment type="function">
    <text evidence="1 3 4">Nuclease required for the repair of DNA interstrand cross-links (ICL). Acts as a 5'-3' exonuclease that anchors at a cut end of DNA and cleaves DNA successively at every third nucleotide, allowing to excise an ICL from one strand through flanking incisions. Also has endonuclease activity toward 5'-flaps (PubMed:25319828).</text>
</comment>
<comment type="catalytic activity">
    <reaction evidence="3 4">
        <text>Hydrolytically removes 5'-nucleotides successively from the 3'-hydroxy termini of 3'-hydroxy-terminated oligonucleotides.</text>
        <dbReference type="EC" id="3.1.4.1"/>
    </reaction>
</comment>
<comment type="cofactor">
    <cofactor evidence="4">
        <name>Mn(2+)</name>
        <dbReference type="ChEBI" id="CHEBI:29035"/>
    </cofactor>
    <cofactor evidence="4">
        <name>Mg(2+)</name>
        <dbReference type="ChEBI" id="CHEBI:18420"/>
    </cofactor>
    <text evidence="4">Binds 2 magnesium or manganese ions per subunit.</text>
</comment>
<comment type="similarity">
    <text evidence="7">Belongs to the FAN1 family.</text>
</comment>
<keyword id="KW-0002">3D-structure</keyword>
<keyword id="KW-0227">DNA damage</keyword>
<keyword id="KW-0234">DNA repair</keyword>
<keyword id="KW-0255">Endonuclease</keyword>
<keyword id="KW-0269">Exonuclease</keyword>
<keyword id="KW-0378">Hydrolase</keyword>
<keyword id="KW-0460">Magnesium</keyword>
<keyword id="KW-0464">Manganese</keyword>
<keyword id="KW-0479">Metal-binding</keyword>
<keyword id="KW-0540">Nuclease</keyword>
<keyword id="KW-1185">Reference proteome</keyword>
<reference key="1">
    <citation type="journal article" date="2000" name="Nature">
        <title>Complete genome sequence of Pseudomonas aeruginosa PAO1, an opportunistic pathogen.</title>
        <authorList>
            <person name="Stover C.K."/>
            <person name="Pham X.-Q.T."/>
            <person name="Erwin A.L."/>
            <person name="Mizoguchi S.D."/>
            <person name="Warrener P."/>
            <person name="Hickey M.J."/>
            <person name="Brinkman F.S.L."/>
            <person name="Hufnagle W.O."/>
            <person name="Kowalik D.J."/>
            <person name="Lagrou M."/>
            <person name="Garber R.L."/>
            <person name="Goltry L."/>
            <person name="Tolentino E."/>
            <person name="Westbrock-Wadman S."/>
            <person name="Yuan Y."/>
            <person name="Brody L.L."/>
            <person name="Coulter S.N."/>
            <person name="Folger K.R."/>
            <person name="Kas A."/>
            <person name="Larbig K."/>
            <person name="Lim R.M."/>
            <person name="Smith K.A."/>
            <person name="Spencer D.H."/>
            <person name="Wong G.K.-S."/>
            <person name="Wu Z."/>
            <person name="Paulsen I.T."/>
            <person name="Reizer J."/>
            <person name="Saier M.H. Jr."/>
            <person name="Hancock R.E.W."/>
            <person name="Lory S."/>
            <person name="Olson M.V."/>
        </authorList>
    </citation>
    <scope>NUCLEOTIDE SEQUENCE [LARGE SCALE GENOMIC DNA]</scope>
    <source>
        <strain>ATCC 15692 / DSM 22644 / CIP 104116 / JCM 14847 / LMG 12228 / 1C / PRS 101 / PAO1</strain>
    </source>
</reference>
<reference key="2">
    <citation type="journal article" date="2014" name="Cell Rep.">
        <title>FAN1 activity on asymmetric repair intermediates is mediated by an atypical monomeric virus-type replication-repair nuclease domain.</title>
        <authorList>
            <person name="Pennell S."/>
            <person name="Declais A.C."/>
            <person name="Li J."/>
            <person name="Haire L.F."/>
            <person name="Berg W."/>
            <person name="Saldanha J.W."/>
            <person name="Taylor I.A."/>
            <person name="Rouse J."/>
            <person name="Lilley D.M."/>
            <person name="Smerdon S.J."/>
        </authorList>
    </citation>
    <scope>FUNCTION</scope>
</reference>
<reference evidence="9 10" key="3">
    <citation type="journal article" date="2014" name="Genes Dev.">
        <title>Crystal structure of a Fanconi anemia-associated nuclease homolog bound to 5' flap DNA: basis of interstrand cross-link repair by FAN1.</title>
        <authorList>
            <person name="Gwon G.H."/>
            <person name="Kim Y."/>
            <person name="Liu Y."/>
            <person name="Watson A.T."/>
            <person name="Jo A."/>
            <person name="Etheridge T.J."/>
            <person name="Yuan F."/>
            <person name="Zhang Y."/>
            <person name="Kim Y."/>
            <person name="Carr A.M."/>
            <person name="Cho Y."/>
        </authorList>
    </citation>
    <scope>X-RAY CRYSTALLOGRAPHY (3.2 ANGSTROMS) IN COMPLEX WITH MANGANESE AND DNA</scope>
    <scope>CATALYTIC ACTIVITY</scope>
    <scope>COFACTOR</scope>
    <scope>MUTAGENESIS OF 65-ARG--ARG-69; TRP-184; 191-VAL-LEU-192; 191-VAL--ILE-197; TRP-253; LEU-421; ASP-507; GLU-522; LYS-524 AND GLN-534</scope>
</reference>
<feature type="chain" id="PRO_0000431957" description="Fanconi-associated nuclease 1 homolog">
    <location>
        <begin position="1"/>
        <end position="559"/>
    </location>
</feature>
<feature type="domain" description="VRR-NUC" evidence="2">
    <location>
        <begin position="443"/>
        <end position="555"/>
    </location>
</feature>
<feature type="binding site" evidence="4 9">
    <location>
        <position position="386"/>
    </location>
    <ligand>
        <name>Mn(2+)</name>
        <dbReference type="ChEBI" id="CHEBI:29035"/>
        <label>2</label>
    </ligand>
</feature>
<feature type="binding site" evidence="4 9">
    <location>
        <position position="507"/>
    </location>
    <ligand>
        <name>Mn(2+)</name>
        <dbReference type="ChEBI" id="CHEBI:29035"/>
        <label>1</label>
    </ligand>
</feature>
<feature type="binding site" evidence="4 9">
    <location>
        <position position="507"/>
    </location>
    <ligand>
        <name>Mn(2+)</name>
        <dbReference type="ChEBI" id="CHEBI:29035"/>
        <label>2</label>
    </ligand>
</feature>
<feature type="binding site" evidence="4 9">
    <location>
        <position position="522"/>
    </location>
    <ligand>
        <name>Mn(2+)</name>
        <dbReference type="ChEBI" id="CHEBI:29035"/>
        <label>1</label>
    </ligand>
</feature>
<feature type="binding site" evidence="4 9">
    <location>
        <position position="523"/>
    </location>
    <ligand>
        <name>Mn(2+)</name>
        <dbReference type="ChEBI" id="CHEBI:29035"/>
        <label>1</label>
    </ligand>
</feature>
<feature type="mutagenesis site" description="Impaired ability to incise a 5' flap structure." evidence="4">
    <original>RMVMR</original>
    <variation>AAAAA</variation>
    <location>
        <begin position="65"/>
        <end position="69"/>
    </location>
</feature>
<feature type="mutagenesis site" description="No effect on nuclease activity." evidence="4">
    <original>W</original>
    <variation>A</variation>
    <location>
        <position position="184"/>
    </location>
</feature>
<feature type="mutagenesis site" description="Decreased nuclease activity." evidence="4">
    <original>VLADLGI</original>
    <variation>AAADAGA</variation>
    <location>
        <begin position="191"/>
        <end position="197"/>
    </location>
</feature>
<feature type="mutagenesis site" description="Decreased nuclease activity." evidence="4">
    <original>VL</original>
    <variation>RR</variation>
    <location>
        <begin position="191"/>
        <end position="192"/>
    </location>
</feature>
<feature type="mutagenesis site" description="Weak nuclease activity." evidence="4">
    <original>W</original>
    <variation>P</variation>
    <location>
        <position position="253"/>
    </location>
</feature>
<feature type="mutagenesis site" description="Strongly decreased nuclease activity." evidence="4">
    <original>L</original>
    <variation>R</variation>
    <location>
        <position position="421"/>
    </location>
</feature>
<feature type="mutagenesis site" description="Loss of nuclease activity." evidence="4">
    <original>D</original>
    <variation>A</variation>
    <location>
        <position position="507"/>
    </location>
</feature>
<feature type="mutagenesis site" description="Loss of nuclease activity." evidence="4">
    <original>E</original>
    <variation>A</variation>
    <location>
        <position position="522"/>
    </location>
</feature>
<feature type="mutagenesis site" description="Loss of nuclease activity." evidence="4">
    <original>K</original>
    <variation>A</variation>
    <location>
        <position position="524"/>
    </location>
</feature>
<feature type="mutagenesis site" description="Loss of function." evidence="4">
    <original>Q</original>
    <variation>A</variation>
    <location>
        <position position="534"/>
    </location>
</feature>
<feature type="helix" evidence="12">
    <location>
        <begin position="21"/>
        <end position="36"/>
    </location>
</feature>
<feature type="turn" evidence="12">
    <location>
        <begin position="38"/>
        <end position="40"/>
    </location>
</feature>
<feature type="helix" evidence="12">
    <location>
        <begin position="43"/>
        <end position="54"/>
    </location>
</feature>
<feature type="helix" evidence="12">
    <location>
        <begin position="57"/>
        <end position="68"/>
    </location>
</feature>
<feature type="strand" evidence="12">
    <location>
        <begin position="69"/>
        <end position="75"/>
    </location>
</feature>
<feature type="helix" evidence="12">
    <location>
        <begin position="76"/>
        <end position="79"/>
    </location>
</feature>
<feature type="turn" evidence="12">
    <location>
        <begin position="82"/>
        <end position="84"/>
    </location>
</feature>
<feature type="helix" evidence="12">
    <location>
        <begin position="87"/>
        <end position="96"/>
    </location>
</feature>
<feature type="strand" evidence="12">
    <location>
        <begin position="99"/>
        <end position="103"/>
    </location>
</feature>
<feature type="helix" evidence="12">
    <location>
        <begin position="108"/>
        <end position="114"/>
    </location>
</feature>
<feature type="helix" evidence="12">
    <location>
        <begin position="117"/>
        <end position="123"/>
    </location>
</feature>
<feature type="helix" evidence="12">
    <location>
        <begin position="125"/>
        <end position="127"/>
    </location>
</feature>
<feature type="helix" evidence="12">
    <location>
        <begin position="135"/>
        <end position="142"/>
    </location>
</feature>
<feature type="turn" evidence="12">
    <location>
        <begin position="143"/>
        <end position="145"/>
    </location>
</feature>
<feature type="helix" evidence="12">
    <location>
        <begin position="152"/>
        <end position="155"/>
    </location>
</feature>
<feature type="strand" evidence="12">
    <location>
        <begin position="163"/>
        <end position="166"/>
    </location>
</feature>
<feature type="helix" evidence="12">
    <location>
        <begin position="169"/>
        <end position="180"/>
    </location>
</feature>
<feature type="strand" evidence="12">
    <location>
        <begin position="181"/>
        <end position="184"/>
    </location>
</feature>
<feature type="helix" evidence="12">
    <location>
        <begin position="188"/>
        <end position="194"/>
    </location>
</feature>
<feature type="helix" evidence="12">
    <location>
        <begin position="215"/>
        <end position="232"/>
    </location>
</feature>
<feature type="helix" evidence="12">
    <location>
        <begin position="237"/>
        <end position="243"/>
    </location>
</feature>
<feature type="helix" evidence="12">
    <location>
        <begin position="252"/>
        <end position="271"/>
    </location>
</feature>
<feature type="helix" evidence="12">
    <location>
        <begin position="275"/>
        <end position="283"/>
    </location>
</feature>
<feature type="helix" evidence="12">
    <location>
        <begin position="290"/>
        <end position="300"/>
    </location>
</feature>
<feature type="helix" evidence="12">
    <location>
        <begin position="304"/>
        <end position="316"/>
    </location>
</feature>
<feature type="helix" evidence="12">
    <location>
        <begin position="321"/>
        <end position="337"/>
    </location>
</feature>
<feature type="strand" evidence="12">
    <location>
        <begin position="353"/>
        <end position="359"/>
    </location>
</feature>
<feature type="strand" evidence="11">
    <location>
        <begin position="362"/>
        <end position="364"/>
    </location>
</feature>
<feature type="helix" evidence="12">
    <location>
        <begin position="367"/>
        <end position="375"/>
    </location>
</feature>
<feature type="strand" evidence="12">
    <location>
        <begin position="380"/>
        <end position="384"/>
    </location>
</feature>
<feature type="helix" evidence="12">
    <location>
        <begin position="388"/>
        <end position="397"/>
    </location>
</feature>
<feature type="helix" evidence="12">
    <location>
        <begin position="399"/>
        <end position="402"/>
    </location>
</feature>
<feature type="helix" evidence="12">
    <location>
        <begin position="419"/>
        <end position="422"/>
    </location>
</feature>
<feature type="helix" evidence="12">
    <location>
        <begin position="426"/>
        <end position="429"/>
    </location>
</feature>
<feature type="helix" evidence="12">
    <location>
        <begin position="431"/>
        <end position="439"/>
    </location>
</feature>
<feature type="turn" evidence="12">
    <location>
        <begin position="440"/>
        <end position="442"/>
    </location>
</feature>
<feature type="helix" evidence="12">
    <location>
        <begin position="446"/>
        <end position="457"/>
    </location>
</feature>
<feature type="turn" evidence="12">
    <location>
        <begin position="467"/>
        <end position="469"/>
    </location>
</feature>
<feature type="helix" evidence="12">
    <location>
        <begin position="472"/>
        <end position="481"/>
    </location>
</feature>
<feature type="helix" evidence="12">
    <location>
        <begin position="484"/>
        <end position="496"/>
    </location>
</feature>
<feature type="helix" evidence="12">
    <location>
        <begin position="498"/>
        <end position="501"/>
    </location>
</feature>
<feature type="strand" evidence="12">
    <location>
        <begin position="507"/>
        <end position="512"/>
    </location>
</feature>
<feature type="turn" evidence="12">
    <location>
        <begin position="513"/>
        <end position="516"/>
    </location>
</feature>
<feature type="strand" evidence="12">
    <location>
        <begin position="517"/>
        <end position="524"/>
    </location>
</feature>
<feature type="helix" evidence="12">
    <location>
        <begin position="532"/>
        <end position="543"/>
    </location>
</feature>
<feature type="strand" evidence="12">
    <location>
        <begin position="548"/>
        <end position="556"/>
    </location>
</feature>
<name>FAN1_PSEAE</name>
<proteinExistence type="evidence at protein level"/>
<evidence type="ECO:0000250" key="1">
    <source>
        <dbReference type="UniProtKB" id="Q9Y2M0"/>
    </source>
</evidence>
<evidence type="ECO:0000255" key="2"/>
<evidence type="ECO:0000269" key="3">
    <source>
    </source>
</evidence>
<evidence type="ECO:0000269" key="4">
    <source>
    </source>
</evidence>
<evidence type="ECO:0000303" key="5">
    <source>
    </source>
</evidence>
<evidence type="ECO:0000303" key="6">
    <source>
    </source>
</evidence>
<evidence type="ECO:0000305" key="7"/>
<evidence type="ECO:0000312" key="8">
    <source>
        <dbReference type="EMBL" id="AAG05254.1"/>
    </source>
</evidence>
<evidence type="ECO:0007744" key="9">
    <source>
        <dbReference type="PDB" id="4R89"/>
    </source>
</evidence>
<evidence type="ECO:0007744" key="10">
    <source>
        <dbReference type="PDB" id="4R8A"/>
    </source>
</evidence>
<evidence type="ECO:0007829" key="11">
    <source>
        <dbReference type="PDB" id="4R8A"/>
    </source>
</evidence>
<evidence type="ECO:0007829" key="12">
    <source>
        <dbReference type="PDB" id="5Y7Q"/>
    </source>
</evidence>
<sequence>MHEQYQAPLPVNSPALPEPFYYLHNFRAVLAWIGERYADLLDDQERAFIAAFAELPEASQALLVRMVMRKGTLFREGKLAYAEIGDTRAAVQPLLALGWVDAQPTLELAQLFGLLKKDELSQLFRDHLGRANLRKDALLERLQPLFPEARRLAEWQADFAEPVYELRCMALCDRLRLMYFGNLWQDWSEFVLADLGIYRYESVEFSADSRGFRLRADVDAYLHLFDCRQRFDLGEPLEELLAGLPGEPYANPWLEGRRVKLLFQFAQHCEKQRDFDLAQRLYRQSSHPGARLRAIRSLERGERFAEAHALAREASCAPESDAERQGLARLLPRLQGKLGLPRQARAAAPEIDRLDLCLAFPSEPCSVEWAVREHLEEPGCAVHYVENGLINSLFGLLCWEAIFAAIPGAFFHPFHSAPADLHSADFRQRRAALFEACLGRLEDGSYRDAIRCRYRDKFGLQSPFVYWELLGEELLEQALDCLPAAHLRAWFERLLEDIPGNRAGLPDLIQFWPAQRRYRMVEVKGPGDRLQDNQLRWLQFCREREMPVAVCYVRWHVDD</sequence>
<accession>Q9I2N0</accession>
<protein>
    <recommendedName>
        <fullName evidence="7">Fanconi-associated nuclease 1 homolog</fullName>
        <shortName evidence="6">PaFAN1</shortName>
        <shortName evidence="5">pFAN1</shortName>
        <ecNumber evidence="3 4">3.1.4.1</ecNumber>
    </recommendedName>
</protein>
<organism>
    <name type="scientific">Pseudomonas aeruginosa (strain ATCC 15692 / DSM 22644 / CIP 104116 / JCM 14847 / LMG 12228 / 1C / PRS 101 / PAO1)</name>
    <dbReference type="NCBI Taxonomy" id="208964"/>
    <lineage>
        <taxon>Bacteria</taxon>
        <taxon>Pseudomonadati</taxon>
        <taxon>Pseudomonadota</taxon>
        <taxon>Gammaproteobacteria</taxon>
        <taxon>Pseudomonadales</taxon>
        <taxon>Pseudomonadaceae</taxon>
        <taxon>Pseudomonas</taxon>
    </lineage>
</organism>